<comment type="function">
    <text evidence="2">ATP-dependent kinase that could be involved in endoplasmic reticulum membrane assembly.</text>
</comment>
<comment type="biophysicochemical properties">
    <kinetics>
        <KM evidence="4">1178 uM for ATP</KM>
    </kinetics>
</comment>
<comment type="disruption phenotype">
    <text evidence="5">Increases frequency of mitochondrial genome loss.</text>
</comment>
<comment type="miscellaneous">
    <text evidence="3">Present with 161 molecules/cell in log phase SD medium.</text>
</comment>
<comment type="similarity">
    <text evidence="6">Belongs to the YFH7 family.</text>
</comment>
<keyword id="KW-0002">3D-structure</keyword>
<keyword id="KW-0067">ATP-binding</keyword>
<keyword id="KW-0418">Kinase</keyword>
<keyword id="KW-0547">Nucleotide-binding</keyword>
<keyword id="KW-1185">Reference proteome</keyword>
<keyword id="KW-0808">Transferase</keyword>
<dbReference type="EC" id="2.7.1.-"/>
<dbReference type="EMBL" id="D50617">
    <property type="protein sequence ID" value="BAA09246.1"/>
    <property type="molecule type" value="Genomic_DNA"/>
</dbReference>
<dbReference type="EMBL" id="AY558494">
    <property type="protein sequence ID" value="AAS56820.1"/>
    <property type="molecule type" value="Genomic_DNA"/>
</dbReference>
<dbReference type="EMBL" id="BK006940">
    <property type="protein sequence ID" value="DAA12447.1"/>
    <property type="molecule type" value="Genomic_DNA"/>
</dbReference>
<dbReference type="PIR" id="S56262">
    <property type="entry name" value="S56262"/>
</dbReference>
<dbReference type="RefSeq" id="NP_116662.1">
    <property type="nucleotide sequence ID" value="NM_001179972.1"/>
</dbReference>
<dbReference type="PDB" id="2GA8">
    <property type="method" value="X-ray"/>
    <property type="resolution" value="1.77 A"/>
    <property type="chains" value="A=1-353"/>
</dbReference>
<dbReference type="PDB" id="2GAA">
    <property type="method" value="X-ray"/>
    <property type="resolution" value="1.95 A"/>
    <property type="chains" value="A=1-353"/>
</dbReference>
<dbReference type="PDBsum" id="2GA8"/>
<dbReference type="PDBsum" id="2GAA"/>
<dbReference type="SMR" id="P43591"/>
<dbReference type="BioGRID" id="31156">
    <property type="interactions" value="63"/>
</dbReference>
<dbReference type="DIP" id="DIP-5443N"/>
<dbReference type="FunCoup" id="P43591">
    <property type="interactions" value="32"/>
</dbReference>
<dbReference type="IntAct" id="P43591">
    <property type="interactions" value="1"/>
</dbReference>
<dbReference type="STRING" id="4932.YFR007W"/>
<dbReference type="PaxDb" id="4932-YFR007W"/>
<dbReference type="PeptideAtlas" id="P43591"/>
<dbReference type="EnsemblFungi" id="YFR007W_mRNA">
    <property type="protein sequence ID" value="YFR007W"/>
    <property type="gene ID" value="YFR007W"/>
</dbReference>
<dbReference type="GeneID" id="850558"/>
<dbReference type="KEGG" id="sce:YFR007W"/>
<dbReference type="AGR" id="SGD:S000001903"/>
<dbReference type="SGD" id="S000001903">
    <property type="gene designation" value="YFH7"/>
</dbReference>
<dbReference type="VEuPathDB" id="FungiDB:YFR007W"/>
<dbReference type="eggNOG" id="KOG2702">
    <property type="taxonomic scope" value="Eukaryota"/>
</dbReference>
<dbReference type="HOGENOM" id="CLU_067202_1_0_1"/>
<dbReference type="InParanoid" id="P43591"/>
<dbReference type="OMA" id="LYDQENW"/>
<dbReference type="OrthoDB" id="6362633at2759"/>
<dbReference type="BioCyc" id="YEAST:G3O-30460-MONOMER"/>
<dbReference type="SABIO-RK" id="P43591"/>
<dbReference type="BioGRID-ORCS" id="850558">
    <property type="hits" value="0 hits in 10 CRISPR screens"/>
</dbReference>
<dbReference type="EvolutionaryTrace" id="P43591"/>
<dbReference type="PRO" id="PR:P43591"/>
<dbReference type="Proteomes" id="UP000002311">
    <property type="component" value="Chromosome VI"/>
</dbReference>
<dbReference type="RNAct" id="P43591">
    <property type="molecule type" value="protein"/>
</dbReference>
<dbReference type="GO" id="GO:0005737">
    <property type="term" value="C:cytoplasm"/>
    <property type="evidence" value="ECO:0000318"/>
    <property type="project" value="GO_Central"/>
</dbReference>
<dbReference type="GO" id="GO:0005524">
    <property type="term" value="F:ATP binding"/>
    <property type="evidence" value="ECO:0007669"/>
    <property type="project" value="UniProtKB-KW"/>
</dbReference>
<dbReference type="GO" id="GO:0016887">
    <property type="term" value="F:ATP hydrolysis activity"/>
    <property type="evidence" value="ECO:0000314"/>
    <property type="project" value="SGD"/>
</dbReference>
<dbReference type="GO" id="GO:0016301">
    <property type="term" value="F:kinase activity"/>
    <property type="evidence" value="ECO:0000250"/>
    <property type="project" value="SGD"/>
</dbReference>
<dbReference type="CDD" id="cd00009">
    <property type="entry name" value="AAA"/>
    <property type="match status" value="1"/>
</dbReference>
<dbReference type="FunFam" id="3.40.50.300:FF:002630">
    <property type="entry name" value="ATP-dependent kinase YFH7"/>
    <property type="match status" value="1"/>
</dbReference>
<dbReference type="Gene3D" id="3.40.50.300">
    <property type="entry name" value="P-loop containing nucleotide triphosphate hydrolases"/>
    <property type="match status" value="1"/>
</dbReference>
<dbReference type="InterPro" id="IPR027417">
    <property type="entry name" value="P-loop_NTPase"/>
</dbReference>
<dbReference type="PANTHER" id="PTHR10285">
    <property type="entry name" value="URIDINE KINASE"/>
    <property type="match status" value="1"/>
</dbReference>
<dbReference type="SUPFAM" id="SSF52540">
    <property type="entry name" value="P-loop containing nucleoside triphosphate hydrolases"/>
    <property type="match status" value="1"/>
</dbReference>
<reference key="1">
    <citation type="journal article" date="1995" name="Nat. Genet.">
        <title>Analysis of the nucleotide sequence of chromosome VI from Saccharomyces cerevisiae.</title>
        <authorList>
            <person name="Murakami Y."/>
            <person name="Naitou M."/>
            <person name="Hagiwara H."/>
            <person name="Shibata T."/>
            <person name="Ozawa M."/>
            <person name="Sasanuma S."/>
            <person name="Sasanuma M."/>
            <person name="Tsuchiya Y."/>
            <person name="Soeda E."/>
            <person name="Yokoyama K."/>
            <person name="Yamazaki M."/>
            <person name="Tashiro H."/>
            <person name="Eki T."/>
        </authorList>
    </citation>
    <scope>NUCLEOTIDE SEQUENCE [LARGE SCALE GENOMIC DNA]</scope>
    <source>
        <strain>ATCC 204508 / S288c</strain>
    </source>
</reference>
<reference key="2">
    <citation type="journal article" date="2014" name="G3 (Bethesda)">
        <title>The reference genome sequence of Saccharomyces cerevisiae: Then and now.</title>
        <authorList>
            <person name="Engel S.R."/>
            <person name="Dietrich F.S."/>
            <person name="Fisk D.G."/>
            <person name="Binkley G."/>
            <person name="Balakrishnan R."/>
            <person name="Costanzo M.C."/>
            <person name="Dwight S.S."/>
            <person name="Hitz B.C."/>
            <person name="Karra K."/>
            <person name="Nash R.S."/>
            <person name="Weng S."/>
            <person name="Wong E.D."/>
            <person name="Lloyd P."/>
            <person name="Skrzypek M.S."/>
            <person name="Miyasato S.R."/>
            <person name="Simison M."/>
            <person name="Cherry J.M."/>
        </authorList>
    </citation>
    <scope>GENOME REANNOTATION</scope>
    <source>
        <strain>ATCC 204508 / S288c</strain>
    </source>
</reference>
<reference key="3">
    <citation type="journal article" date="2007" name="Genome Res.">
        <title>Approaching a complete repository of sequence-verified protein-encoding clones for Saccharomyces cerevisiae.</title>
        <authorList>
            <person name="Hu Y."/>
            <person name="Rolfs A."/>
            <person name="Bhullar B."/>
            <person name="Murthy T.V.S."/>
            <person name="Zhu C."/>
            <person name="Berger M.F."/>
            <person name="Camargo A.A."/>
            <person name="Kelley F."/>
            <person name="McCarron S."/>
            <person name="Jepson D."/>
            <person name="Richardson A."/>
            <person name="Raphael J."/>
            <person name="Moreira D."/>
            <person name="Taycher E."/>
            <person name="Zuo D."/>
            <person name="Mohr S."/>
            <person name="Kane M.F."/>
            <person name="Williamson J."/>
            <person name="Simpson A.J.G."/>
            <person name="Bulyk M.L."/>
            <person name="Harlow E."/>
            <person name="Marsischky G."/>
            <person name="Kolodner R.D."/>
            <person name="LaBaer J."/>
        </authorList>
    </citation>
    <scope>NUCLEOTIDE SEQUENCE [GENOMIC DNA]</scope>
    <source>
        <strain>ATCC 204508 / S288c</strain>
    </source>
</reference>
<reference key="4">
    <citation type="journal article" date="2003" name="Nature">
        <title>Global analysis of protein expression in yeast.</title>
        <authorList>
            <person name="Ghaemmaghami S."/>
            <person name="Huh W.-K."/>
            <person name="Bower K."/>
            <person name="Howson R.W."/>
            <person name="Belle A."/>
            <person name="Dephoure N."/>
            <person name="O'Shea E.K."/>
            <person name="Weissman J.S."/>
        </authorList>
    </citation>
    <scope>LEVEL OF PROTEIN EXPRESSION [LARGE SCALE ANALYSIS]</scope>
</reference>
<reference key="5">
    <citation type="journal article" date="2003" name="Yeast">
        <title>Parallel analysis of tagged deletion mutants efficiently identifies genes involved in endoplasmic reticulum biogenesis.</title>
        <authorList>
            <person name="Wright R."/>
            <person name="Parrish M.L."/>
            <person name="Cadera E."/>
            <person name="Larson L."/>
            <person name="Matson C.K."/>
            <person name="Garrett-Engele P."/>
            <person name="Armour C."/>
            <person name="Lum P.Y."/>
            <person name="Shoemaker D.D."/>
        </authorList>
    </citation>
    <scope>FUNCTION</scope>
</reference>
<reference key="6">
    <citation type="journal article" date="2009" name="PLoS Genet.">
        <title>Computationally driven, quantitative experiments discover genes required for mitochondrial biogenesis.</title>
        <authorList>
            <person name="Hess D.C."/>
            <person name="Myers C.L."/>
            <person name="Huttenhower C."/>
            <person name="Hibbs M.A."/>
            <person name="Hayes A.P."/>
            <person name="Paw J."/>
            <person name="Clore J.J."/>
            <person name="Mendoza R.M."/>
            <person name="Luis B.S."/>
            <person name="Nislow C."/>
            <person name="Giaever G."/>
            <person name="Costanzo M."/>
            <person name="Troyanskaya O.G."/>
            <person name="Caudy A.A."/>
        </authorList>
    </citation>
    <scope>DISRUPTION PHENOTYPE</scope>
</reference>
<reference key="7">
    <citation type="journal article" date="2012" name="Proc. Natl. Acad. Sci. U.S.A.">
        <title>N-terminal acetylome analyses and functional insights of the N-terminal acetyltransferase NatB.</title>
        <authorList>
            <person name="Van Damme P."/>
            <person name="Lasa M."/>
            <person name="Polevoda B."/>
            <person name="Gazquez C."/>
            <person name="Elosegui-Artola A."/>
            <person name="Kim D.S."/>
            <person name="De Juan-Pardo E."/>
            <person name="Demeyer K."/>
            <person name="Hole K."/>
            <person name="Larrea E."/>
            <person name="Timmerman E."/>
            <person name="Prieto J."/>
            <person name="Arnesen T."/>
            <person name="Sherman F."/>
            <person name="Gevaert K."/>
            <person name="Aldabe R."/>
        </authorList>
    </citation>
    <scope>IDENTIFICATION BY MASS SPECTROMETRY [LARGE SCALE ANALYSIS]</scope>
</reference>
<reference key="8">
    <citation type="journal article" date="2008" name="Proteins">
        <title>Crystal structure and functional analysis identify the P-loop containing protein YFH7 of Saccharomyces cerevisiae as an ATP-dependent kinase.</title>
        <authorList>
            <person name="Gueguen-Chaignon V."/>
            <person name="Chaptal V."/>
            <person name="Lariviere L."/>
            <person name="Costa N."/>
            <person name="Lopes P."/>
            <person name="Morera S."/>
            <person name="Nessler S."/>
        </authorList>
    </citation>
    <scope>X-RAY CRYSTALLOGRAPHY (1.77 ANGSTROMS)</scope>
    <scope>BIOPHYSICOCHEMICAL PROPERTIES</scope>
</reference>
<evidence type="ECO:0000250" key="1"/>
<evidence type="ECO:0000269" key="2">
    <source>
    </source>
</evidence>
<evidence type="ECO:0000269" key="3">
    <source>
    </source>
</evidence>
<evidence type="ECO:0000269" key="4">
    <source>
    </source>
</evidence>
<evidence type="ECO:0000269" key="5">
    <source>
    </source>
</evidence>
<evidence type="ECO:0000305" key="6"/>
<evidence type="ECO:0007829" key="7">
    <source>
        <dbReference type="PDB" id="2GA8"/>
    </source>
</evidence>
<name>YFH7_YEAST</name>
<gene>
    <name type="primary">YFH7</name>
    <name type="synonym">AIM12</name>
    <name type="ordered locus">YFR007W</name>
</gene>
<sequence>MVDTHKLADDVLQLLDNRIEDNYRVCVILVGSPGSGKSTIAEELCQIINEKYHTFLSEHPNVIEVNDRLKPMVNLVDSLKTLQPNKVAEMIENQGLFKDHVEDVNFQPVKYSALTSNNEECTAVVARGGTANAIRIAAVDNPVNVNKLAQDSINIAQIVPMDGFHLSRRCLDLFKDPQTAHKRRGSPSTFDSNNFLQLCKILAKTSLCKVSSHHKFYSTSSVFEKLSKTFSQTIPDIFVPGFNHALKDPTPDQYCISKFTRIVILEGLYLLYDQENWKKIYKTLADTGALLVYKIDIDYEATEERVAKRHLQSGLVTTIAEGREKFRSNDLLNGRDIDNHLIKVDNIVHIRND</sequence>
<organism>
    <name type="scientific">Saccharomyces cerevisiae (strain ATCC 204508 / S288c)</name>
    <name type="common">Baker's yeast</name>
    <dbReference type="NCBI Taxonomy" id="559292"/>
    <lineage>
        <taxon>Eukaryota</taxon>
        <taxon>Fungi</taxon>
        <taxon>Dikarya</taxon>
        <taxon>Ascomycota</taxon>
        <taxon>Saccharomycotina</taxon>
        <taxon>Saccharomycetes</taxon>
        <taxon>Saccharomycetales</taxon>
        <taxon>Saccharomycetaceae</taxon>
        <taxon>Saccharomyces</taxon>
    </lineage>
</organism>
<proteinExistence type="evidence at protein level"/>
<feature type="chain" id="PRO_0000202683" description="ATP-dependent kinase YFH7">
    <location>
        <begin position="1"/>
        <end position="353"/>
    </location>
</feature>
<feature type="binding site" evidence="1">
    <location>
        <begin position="31"/>
        <end position="39"/>
    </location>
    <ligand>
        <name>ATP</name>
        <dbReference type="ChEBI" id="CHEBI:30616"/>
    </ligand>
</feature>
<feature type="helix" evidence="7">
    <location>
        <begin position="4"/>
        <end position="17"/>
    </location>
</feature>
<feature type="turn" evidence="7">
    <location>
        <begin position="18"/>
        <end position="21"/>
    </location>
</feature>
<feature type="strand" evidence="7">
    <location>
        <begin position="25"/>
        <end position="30"/>
    </location>
</feature>
<feature type="helix" evidence="7">
    <location>
        <begin position="37"/>
        <end position="58"/>
    </location>
</feature>
<feature type="strand" evidence="7">
    <location>
        <begin position="79"/>
        <end position="81"/>
    </location>
</feature>
<feature type="helix" evidence="7">
    <location>
        <begin position="84"/>
        <end position="92"/>
    </location>
</feature>
<feature type="turn" evidence="7">
    <location>
        <begin position="93"/>
        <end position="95"/>
    </location>
</feature>
<feature type="helix" evidence="7">
    <location>
        <begin position="98"/>
        <end position="100"/>
    </location>
</feature>
<feature type="strand" evidence="7">
    <location>
        <begin position="109"/>
        <end position="113"/>
    </location>
</feature>
<feature type="strand" evidence="7">
    <location>
        <begin position="121"/>
        <end position="125"/>
    </location>
</feature>
<feature type="helix" evidence="7">
    <location>
        <begin position="129"/>
        <end position="132"/>
    </location>
</feature>
<feature type="strand" evidence="7">
    <location>
        <begin position="134"/>
        <end position="136"/>
    </location>
</feature>
<feature type="strand" evidence="7">
    <location>
        <begin position="155"/>
        <end position="160"/>
    </location>
</feature>
<feature type="helix" evidence="7">
    <location>
        <begin position="161"/>
        <end position="164"/>
    </location>
</feature>
<feature type="helix" evidence="7">
    <location>
        <begin position="168"/>
        <end position="171"/>
    </location>
</feature>
<feature type="strand" evidence="7">
    <location>
        <begin position="174"/>
        <end position="176"/>
    </location>
</feature>
<feature type="helix" evidence="7">
    <location>
        <begin position="178"/>
        <end position="181"/>
    </location>
</feature>
<feature type="turn" evidence="7">
    <location>
        <begin position="182"/>
        <end position="185"/>
    </location>
</feature>
<feature type="helix" evidence="7">
    <location>
        <begin position="187"/>
        <end position="189"/>
    </location>
</feature>
<feature type="helix" evidence="7">
    <location>
        <begin position="192"/>
        <end position="206"/>
    </location>
</feature>
<feature type="helix" evidence="7">
    <location>
        <begin position="222"/>
        <end position="227"/>
    </location>
</feature>
<feature type="strand" evidence="7">
    <location>
        <begin position="237"/>
        <end position="243"/>
    </location>
</feature>
<feature type="turn" evidence="7">
    <location>
        <begin position="244"/>
        <end position="247"/>
    </location>
</feature>
<feature type="strand" evidence="7">
    <location>
        <begin position="248"/>
        <end position="256"/>
    </location>
</feature>
<feature type="strand" evidence="7">
    <location>
        <begin position="262"/>
        <end position="269"/>
    </location>
</feature>
<feature type="helix" evidence="7">
    <location>
        <begin position="275"/>
        <end position="285"/>
    </location>
</feature>
<feature type="turn" evidence="7">
    <location>
        <begin position="286"/>
        <end position="288"/>
    </location>
</feature>
<feature type="strand" evidence="7">
    <location>
        <begin position="290"/>
        <end position="296"/>
    </location>
</feature>
<feature type="helix" evidence="7">
    <location>
        <begin position="299"/>
        <end position="312"/>
    </location>
</feature>
<feature type="helix" evidence="7">
    <location>
        <begin position="319"/>
        <end position="328"/>
    </location>
</feature>
<feature type="turn" evidence="7">
    <location>
        <begin position="330"/>
        <end position="332"/>
    </location>
</feature>
<feature type="helix" evidence="7">
    <location>
        <begin position="335"/>
        <end position="339"/>
    </location>
</feature>
<feature type="strand" evidence="7">
    <location>
        <begin position="347"/>
        <end position="351"/>
    </location>
</feature>
<accession>P43591</accession>
<accession>D6VTN7</accession>
<protein>
    <recommendedName>
        <fullName>ATP-dependent kinase YFH7</fullName>
        <ecNumber>2.7.1.-</ecNumber>
    </recommendedName>
    <alternativeName>
        <fullName>Altered inheritance of mitochondria protein 12</fullName>
    </alternativeName>
</protein>